<comment type="function">
    <text evidence="3 4">Catalyzes the irreversible transamination of the L-tryptophan metabolite L-kynurenine to form kynurenic acid (KA) (PubMed:12110301, PubMed:15556614). Also catalyzes the irreversible transamination of several amino acids including cysteine, tyrosine, glutamine, methionine, histidine and phenylalanine (PubMed:15556614). Can use various keto-acids as the amino group acceptor (PubMed:12110301, PubMed:15556614).</text>
</comment>
<comment type="catalytic activity">
    <reaction evidence="3 4">
        <text>L-kynurenine + pyruvate = kynurenate + L-alanine + H2O</text>
        <dbReference type="Rhea" id="RHEA:65916"/>
        <dbReference type="ChEBI" id="CHEBI:15361"/>
        <dbReference type="ChEBI" id="CHEBI:15377"/>
        <dbReference type="ChEBI" id="CHEBI:57959"/>
        <dbReference type="ChEBI" id="CHEBI:57972"/>
        <dbReference type="ChEBI" id="CHEBI:58454"/>
    </reaction>
</comment>
<comment type="catalytic activity">
    <reaction evidence="3 4">
        <text>L-kynurenine + 2-oxoglutarate = kynurenate + L-glutamate + H2O</text>
        <dbReference type="Rhea" id="RHEA:65560"/>
        <dbReference type="ChEBI" id="CHEBI:15377"/>
        <dbReference type="ChEBI" id="CHEBI:16810"/>
        <dbReference type="ChEBI" id="CHEBI:29985"/>
        <dbReference type="ChEBI" id="CHEBI:57959"/>
        <dbReference type="ChEBI" id="CHEBI:58454"/>
        <dbReference type="EC" id="2.6.1.7"/>
    </reaction>
</comment>
<comment type="catalytic activity">
    <reaction evidence="4">
        <text>L-kynurenine + glyoxylate = kynurenate + glycine + H2O</text>
        <dbReference type="Rhea" id="RHEA:65896"/>
        <dbReference type="ChEBI" id="CHEBI:15377"/>
        <dbReference type="ChEBI" id="CHEBI:36655"/>
        <dbReference type="ChEBI" id="CHEBI:57305"/>
        <dbReference type="ChEBI" id="CHEBI:57959"/>
        <dbReference type="ChEBI" id="CHEBI:58454"/>
        <dbReference type="EC" id="2.6.1.63"/>
    </reaction>
</comment>
<comment type="catalytic activity">
    <reaction evidence="4">
        <text>2-oxobutanoate + L-kynurenine = (2S)-2-aminobutanoate + kynurenate + H2O</text>
        <dbReference type="Rhea" id="RHEA:66044"/>
        <dbReference type="ChEBI" id="CHEBI:15377"/>
        <dbReference type="ChEBI" id="CHEBI:16763"/>
        <dbReference type="ChEBI" id="CHEBI:57959"/>
        <dbReference type="ChEBI" id="CHEBI:58454"/>
        <dbReference type="ChEBI" id="CHEBI:74359"/>
    </reaction>
</comment>
<comment type="catalytic activity">
    <reaction evidence="4">
        <text>2-oxobutanoate + L-cysteine = 2-oxo-3-sulfanylpropanoate + (2S)-2-aminobutanoate</text>
        <dbReference type="Rhea" id="RHEA:66108"/>
        <dbReference type="ChEBI" id="CHEBI:16763"/>
        <dbReference type="ChEBI" id="CHEBI:35235"/>
        <dbReference type="ChEBI" id="CHEBI:57678"/>
        <dbReference type="ChEBI" id="CHEBI:74359"/>
    </reaction>
</comment>
<comment type="catalytic activity">
    <reaction evidence="4">
        <text>2-oxobutanoate + L-tyrosine = (2S)-2-aminobutanoate + 3-(4-hydroxyphenyl)pyruvate</text>
        <dbReference type="Rhea" id="RHEA:66112"/>
        <dbReference type="ChEBI" id="CHEBI:16763"/>
        <dbReference type="ChEBI" id="CHEBI:36242"/>
        <dbReference type="ChEBI" id="CHEBI:58315"/>
        <dbReference type="ChEBI" id="CHEBI:74359"/>
    </reaction>
</comment>
<comment type="catalytic activity">
    <reaction evidence="4">
        <text>2-oxobutanoate + L-glutamine = 2-oxoglutaramate + (2S)-2-aminobutanoate</text>
        <dbReference type="Rhea" id="RHEA:66116"/>
        <dbReference type="ChEBI" id="CHEBI:16763"/>
        <dbReference type="ChEBI" id="CHEBI:16769"/>
        <dbReference type="ChEBI" id="CHEBI:58359"/>
        <dbReference type="ChEBI" id="CHEBI:74359"/>
    </reaction>
</comment>
<comment type="catalytic activity">
    <reaction evidence="4">
        <text>2-oxobutanoate + L-methionine = (2S)-2-aminobutanoate + 4-methylsulfanyl-2-oxobutanoate</text>
        <dbReference type="Rhea" id="RHEA:66120"/>
        <dbReference type="ChEBI" id="CHEBI:16723"/>
        <dbReference type="ChEBI" id="CHEBI:16763"/>
        <dbReference type="ChEBI" id="CHEBI:57844"/>
        <dbReference type="ChEBI" id="CHEBI:74359"/>
    </reaction>
</comment>
<comment type="catalytic activity">
    <reaction evidence="4">
        <text>2-oxobutanoate + L-histidine = 3-(imidazol-5-yl)pyruvate + (2S)-2-aminobutanoate</text>
        <dbReference type="Rhea" id="RHEA:66124"/>
        <dbReference type="ChEBI" id="CHEBI:16763"/>
        <dbReference type="ChEBI" id="CHEBI:57595"/>
        <dbReference type="ChEBI" id="CHEBI:58133"/>
        <dbReference type="ChEBI" id="CHEBI:74359"/>
    </reaction>
</comment>
<comment type="catalytic activity">
    <reaction evidence="4">
        <text>2-oxobutanoate + L-phenylalanine = (2S)-2-aminobutanoate + 3-phenylpyruvate</text>
        <dbReference type="Rhea" id="RHEA:66128"/>
        <dbReference type="ChEBI" id="CHEBI:16763"/>
        <dbReference type="ChEBI" id="CHEBI:18005"/>
        <dbReference type="ChEBI" id="CHEBI:58095"/>
        <dbReference type="ChEBI" id="CHEBI:74359"/>
    </reaction>
</comment>
<comment type="catalytic activity">
    <reaction evidence="4">
        <text>indole-3-pyruvate + L-kynurenine = kynurenate + L-tryptophan + H2O</text>
        <dbReference type="Rhea" id="RHEA:66052"/>
        <dbReference type="ChEBI" id="CHEBI:15377"/>
        <dbReference type="ChEBI" id="CHEBI:17640"/>
        <dbReference type="ChEBI" id="CHEBI:57912"/>
        <dbReference type="ChEBI" id="CHEBI:57959"/>
        <dbReference type="ChEBI" id="CHEBI:58454"/>
    </reaction>
</comment>
<comment type="catalytic activity">
    <reaction evidence="4">
        <text>2-oxohexanoate + L-kynurenine = L-2-aminohexanoate + kynurenate + H2O</text>
        <dbReference type="Rhea" id="RHEA:66060"/>
        <dbReference type="ChEBI" id="CHEBI:15377"/>
        <dbReference type="ChEBI" id="CHEBI:35177"/>
        <dbReference type="ChEBI" id="CHEBI:57959"/>
        <dbReference type="ChEBI" id="CHEBI:58454"/>
        <dbReference type="ChEBI" id="CHEBI:58455"/>
    </reaction>
</comment>
<comment type="catalytic activity">
    <reaction evidence="4">
        <text>4-methyl-2-oxopentanoate + L-kynurenine = kynurenate + L-leucine + H2O</text>
        <dbReference type="Rhea" id="RHEA:66068"/>
        <dbReference type="ChEBI" id="CHEBI:15377"/>
        <dbReference type="ChEBI" id="CHEBI:17865"/>
        <dbReference type="ChEBI" id="CHEBI:57427"/>
        <dbReference type="ChEBI" id="CHEBI:57959"/>
        <dbReference type="ChEBI" id="CHEBI:58454"/>
    </reaction>
</comment>
<comment type="catalytic activity">
    <reaction evidence="4">
        <text>2-oxopentanoate + L-kynurenine = L-2-aminopentanoate + kynurenate + H2O</text>
        <dbReference type="Rhea" id="RHEA:66076"/>
        <dbReference type="ChEBI" id="CHEBI:15377"/>
        <dbReference type="ChEBI" id="CHEBI:28644"/>
        <dbReference type="ChEBI" id="CHEBI:57959"/>
        <dbReference type="ChEBI" id="CHEBI:58441"/>
        <dbReference type="ChEBI" id="CHEBI:58454"/>
    </reaction>
</comment>
<comment type="catalytic activity">
    <reaction evidence="4">
        <text>L-kynurenine + oxaloacetate = kynurenate + L-aspartate + H2O</text>
        <dbReference type="Rhea" id="RHEA:66084"/>
        <dbReference type="ChEBI" id="CHEBI:15377"/>
        <dbReference type="ChEBI" id="CHEBI:16452"/>
        <dbReference type="ChEBI" id="CHEBI:29991"/>
        <dbReference type="ChEBI" id="CHEBI:57959"/>
        <dbReference type="ChEBI" id="CHEBI:58454"/>
    </reaction>
</comment>
<comment type="catalytic activity">
    <reaction evidence="4">
        <text>3-phenylpyruvate + L-kynurenine = kynurenate + L-phenylalanine + H2O</text>
        <dbReference type="Rhea" id="RHEA:66092"/>
        <dbReference type="ChEBI" id="CHEBI:15377"/>
        <dbReference type="ChEBI" id="CHEBI:18005"/>
        <dbReference type="ChEBI" id="CHEBI:57959"/>
        <dbReference type="ChEBI" id="CHEBI:58095"/>
        <dbReference type="ChEBI" id="CHEBI:58454"/>
    </reaction>
</comment>
<comment type="catalytic activity">
    <reaction evidence="4">
        <text>3-(4-hydroxyphenyl)pyruvate + L-kynurenine = kynurenate + L-tyrosine + H2O</text>
        <dbReference type="Rhea" id="RHEA:66100"/>
        <dbReference type="ChEBI" id="CHEBI:15377"/>
        <dbReference type="ChEBI" id="CHEBI:36242"/>
        <dbReference type="ChEBI" id="CHEBI:57959"/>
        <dbReference type="ChEBI" id="CHEBI:58315"/>
        <dbReference type="ChEBI" id="CHEBI:58454"/>
    </reaction>
</comment>
<comment type="cofactor">
    <cofactor evidence="5 6">
        <name>pyridoxal 5'-phosphate</name>
        <dbReference type="ChEBI" id="CHEBI:597326"/>
    </cofactor>
</comment>
<comment type="activity regulation">
    <text evidence="4">Competitive inhibition of L-kynurenine transamination by glutamine, methionine and histidine but not by tyrosine and phenylalanine (PubMed:15556614). Cysteine concentration between 0.31-2.5 mM increases L-kynurenine transamination while concentration above 2.5 mM inhibits L-kynurenine transamination (PubMed:15556614). Keto-acids as amino acceptors modulate the transamination activity toward L-kynurenine (PubMed:15556614).</text>
</comment>
<comment type="biophysicochemical properties">
    <kinetics>
        <KM evidence="4">1.3 mM for cysteine (at 45 degrees Celsius, at pH 8.5 and with ketobutyrate as cosubstrate)</KM>
        <KM evidence="4">0.9 mM for tyrosine (at 45 degrees Celsius, at pH 8.5 and with ketobutyrate as cosubstrate)</KM>
        <KM evidence="4">3.8 mM for glutamine (at 45 degrees Celsius, at pH 8.5 and with ketobutyrate as cosubstrate)</KM>
        <KM evidence="4">1.4 mM for methionine (at 45 degrees Celsius, at pH 8.5 and with ketobutyrate as cosubstrate)</KM>
        <KM evidence="4">1.5 mM for histidine (at 45 degrees Celsius, at pH 8.5 and with ketobutyrate as cosubstrate)</KM>
        <KM evidence="4">3.5 mM for phenylalanine (at 45 degrees Celsius, at pH 8.5 and with ketobutyrate as cosubstrate)</KM>
        <KM evidence="4">4.3 mM for kynurenine (at 45 degrees Celsius, at pH 8.5 and with ketobutyrate as cosubstrate)</KM>
        <KM evidence="4">6.1 mM for asparagine (at 45 degrees Celsius, at pH 8.5 and with ketobutyrate as cosubstrate)</KM>
        <KM evidence="4">12.9 mM for tryptophan (at 45 degrees Celsius, at pH 8.5 and with ketobutyrate as cosubstrate)</KM>
        <KM evidence="4">34.5 mM for leucine (at 45 degrees Celsius, at pH 8.5 and with ketobutyrate as cosubstrate)</KM>
        <KM evidence="4">32.7 mM for serine (at 45 degrees Celsius, at pH 8.5 and with ketobutyrate as cosubstrate)</KM>
        <KM evidence="4">246 mM for alanine (at 45 degrees Celsius, at pH 8.5 and with ketobutyrate as cosubstrate)</KM>
        <KM evidence="4">92.7 mM for amino-butyrate (at 45 degrees Celsius, at pH 8.5 and with pyruvate as cosubstrate)</KM>
        <text evidence="4">kcat is 206 min(-1) for cysteine (at 45 degrees Celsius, at pH 8.5 and with ketobutyrate as cosubstrate) (PubMed:15556614). kcat is 139 min(-1) for tyrosine (at 45 degrees Celsius, at pH 8.5 and with ketobutyrate as cosubstrate) (PubMed:15556614). kcat is 561 min(-1) for glutamine (at 45 degrees Celsius, at pH 8.5 and with ketobutyrate as cosubstrate) (PubMed:15556614). kcat is 163 min(-1) for methionine (at 45 degrees Celsius, at pH 8.5 and with ketobutyrate as cosubstrate) (PubMed:15556614). kcat is 168 min(-1) for histidine (at 45 degrees Celsius, at pH 8.5 and with ketobutyrate as cosubstrate) (PubMed:15556614). kcat is 283 min(-1) for cysteine (at 45 degrees Celsius, at pH 8.5 and with ketobutyrate as cosubstrate) (PubMed:15556614). kcat is 172 min(-1) for kynurenine (at 45 degrees Celsius, at pH 8.5 and with ketobutyrate as cosubstrate) (PubMed:15556614). kcat is 230 min(-1) for asparagine (at 45 degrees Celsius, at pH 8.5 and with ketobutyrate as cosubstrate) (PubMed:15556614). kcat is 283 min(-1) for tryptophan (at 45 degrees Celsius, at pH 8.5 and with ketobutyrate as cosubstrate) (PubMed:15556614). kcat is 758 min(-1) for leucine (at 45 degrees Celsius, at pH 8.5 and with ketobutyrate as cosubstrate) (PubMed:15556614). kcat is 345 min(-1) for serine (at 45 degrees Celsius, at pH 8.5 and with ketobutyrate as cosubstrate) (PubMed:15556614). kcat is 1540 min(-1) for alanine (at 45 degrees Celsius, at pH 8.5 and with ketobutyrate as cosubstrate) (PubMed:15556614). kcat is 317 min(-1) for amino-butyrate (at 45 degrees Celsius, at pH 8.5 and with pyruvate as cosubstrate) (PubMed:15556614).</text>
    </kinetics>
    <phDependence>
        <text evidence="3">Optimum pH is 8.5 and 10 (with pyruvate as cosubstrate).</text>
    </phDependence>
    <temperatureDependence>
        <text evidence="3">Optimum temperature is 60 degrees Celsius (at pH 8.5 and with pyruvate as cosubstrate).</text>
    </temperatureDependence>
</comment>
<comment type="pathway">
    <text evidence="3 4">Amino-acid degradation; L-kynurenine degradation; kynurenate from L-kynurenine: step 1/2.</text>
</comment>
<comment type="subunit">
    <text evidence="10 11 12">Homodimer.</text>
</comment>
<comment type="subcellular location">
    <subcellularLocation>
        <location evidence="1">Mitochondrion</location>
    </subcellularLocation>
</comment>
<comment type="tissue specificity">
    <text evidence="3">Expressed in developing ovaries (PubMed:12110301). Expressed at high levels in the head (PubMed:12110301).</text>
</comment>
<comment type="developmental stage">
    <text evidence="3">Expressed in larvae, pupae and adults (PubMed:12110301). Expressed at low levels in larvae, then expression increases at the beginning of pupal development to reach high expression levels in adults (PubMed:12110301).</text>
</comment>
<comment type="similarity">
    <text evidence="9">Belongs to the class-I pyridoxal-phosphate-dependent aminotransferase family.</text>
</comment>
<comment type="caution">
    <text evidence="7">X-ray structure in 1YIZ has been refined and redeposited in 5VEH.</text>
</comment>
<dbReference type="EC" id="2.6.1.-" evidence="3 4"/>
<dbReference type="EC" id="2.6.1.63" evidence="4"/>
<dbReference type="EC" id="2.6.1.7" evidence="3 4"/>
<dbReference type="EMBL" id="AF395204">
    <property type="protein sequence ID" value="AAK97625.1"/>
    <property type="molecule type" value="mRNA"/>
</dbReference>
<dbReference type="EMBL" id="CH477304">
    <property type="protein sequence ID" value="EAT44194.1"/>
    <property type="molecule type" value="Genomic_DNA"/>
</dbReference>
<dbReference type="PDB" id="1YIY">
    <property type="method" value="X-ray"/>
    <property type="resolution" value="1.90 A"/>
    <property type="chains" value="A/B=49-477"/>
</dbReference>
<dbReference type="PDB" id="1YIZ">
    <property type="method" value="X-ray"/>
    <property type="resolution" value="1.55 A"/>
    <property type="chains" value="A/B=49-477"/>
</dbReference>
<dbReference type="PDB" id="2R5C">
    <property type="method" value="X-ray"/>
    <property type="resolution" value="1.96 A"/>
    <property type="chains" value="A/B=49-477"/>
</dbReference>
<dbReference type="PDB" id="2R5E">
    <property type="method" value="X-ray"/>
    <property type="resolution" value="1.84 A"/>
    <property type="chains" value="A/B=49-477"/>
</dbReference>
<dbReference type="PDB" id="5VEH">
    <property type="method" value="X-ray"/>
    <property type="resolution" value="1.55 A"/>
    <property type="chains" value="A/B=49-475"/>
</dbReference>
<dbReference type="PDBsum" id="1YIY"/>
<dbReference type="PDBsum" id="1YIZ"/>
<dbReference type="PDBsum" id="2R5C"/>
<dbReference type="PDBsum" id="2R5E"/>
<dbReference type="PDBsum" id="5VEH"/>
<dbReference type="SMR" id="Q17CS8"/>
<dbReference type="FunCoup" id="Q17CS8">
    <property type="interactions" value="1641"/>
</dbReference>
<dbReference type="STRING" id="7159.Q17CS8"/>
<dbReference type="GlyCosmos" id="Q17CS8">
    <property type="glycosylation" value="2 sites, No reported glycans"/>
</dbReference>
<dbReference type="PaxDb" id="7159-AAEL004435-PA"/>
<dbReference type="EnsemblMetazoa" id="AAEL004435-RA">
    <property type="protein sequence ID" value="AAEL004435-PA"/>
    <property type="gene ID" value="AAEL004435"/>
</dbReference>
<dbReference type="GeneID" id="5564787"/>
<dbReference type="KEGG" id="aag:5564787"/>
<dbReference type="VEuPathDB" id="VectorBase:AAEL004435"/>
<dbReference type="eggNOG" id="KOG0257">
    <property type="taxonomic scope" value="Eukaryota"/>
</dbReference>
<dbReference type="HOGENOM" id="CLU_017584_4_0_1"/>
<dbReference type="InParanoid" id="Q17CS8"/>
<dbReference type="OMA" id="PRDFKLC"/>
<dbReference type="OrthoDB" id="2414662at2759"/>
<dbReference type="PhylomeDB" id="Q17CS8"/>
<dbReference type="BRENDA" id="2.6.1.7">
    <property type="organism ID" value="149"/>
</dbReference>
<dbReference type="UniPathway" id="UPA00334">
    <property type="reaction ID" value="UER00726"/>
</dbReference>
<dbReference type="EvolutionaryTrace" id="Q17CS8"/>
<dbReference type="Proteomes" id="UP000008820">
    <property type="component" value="Chromosome 3"/>
</dbReference>
<dbReference type="Proteomes" id="UP000682892">
    <property type="component" value="Chromosome 3"/>
</dbReference>
<dbReference type="GO" id="GO:0005739">
    <property type="term" value="C:mitochondrion"/>
    <property type="evidence" value="ECO:0007669"/>
    <property type="project" value="UniProtKB-SubCell"/>
</dbReference>
<dbReference type="GO" id="GO:0047315">
    <property type="term" value="F:kynurenine-glyoxylate transaminase activity"/>
    <property type="evidence" value="ECO:0007669"/>
    <property type="project" value="UniProtKB-EC"/>
</dbReference>
<dbReference type="GO" id="GO:0016212">
    <property type="term" value="F:kynurenine-oxoglutarate transaminase activity"/>
    <property type="evidence" value="ECO:0000314"/>
    <property type="project" value="UniProtKB"/>
</dbReference>
<dbReference type="GO" id="GO:0030170">
    <property type="term" value="F:pyridoxal phosphate binding"/>
    <property type="evidence" value="ECO:0007669"/>
    <property type="project" value="InterPro"/>
</dbReference>
<dbReference type="GO" id="GO:0009058">
    <property type="term" value="P:biosynthetic process"/>
    <property type="evidence" value="ECO:0007669"/>
    <property type="project" value="InterPro"/>
</dbReference>
<dbReference type="GO" id="GO:0097053">
    <property type="term" value="P:L-kynurenine catabolic process"/>
    <property type="evidence" value="ECO:0000314"/>
    <property type="project" value="UniProtKB"/>
</dbReference>
<dbReference type="CDD" id="cd00609">
    <property type="entry name" value="AAT_like"/>
    <property type="match status" value="1"/>
</dbReference>
<dbReference type="FunFam" id="3.40.640.10:FF:000024">
    <property type="entry name" value="Kynurenine--oxoglutarate transaminase 3"/>
    <property type="match status" value="1"/>
</dbReference>
<dbReference type="FunFam" id="3.90.1150.10:FF:000021">
    <property type="entry name" value="Kynurenine--oxoglutarate transaminase 3"/>
    <property type="match status" value="1"/>
</dbReference>
<dbReference type="Gene3D" id="3.90.1150.10">
    <property type="entry name" value="Aspartate Aminotransferase, domain 1"/>
    <property type="match status" value="1"/>
</dbReference>
<dbReference type="Gene3D" id="3.40.640.10">
    <property type="entry name" value="Type I PLP-dependent aspartate aminotransferase-like (Major domain)"/>
    <property type="match status" value="1"/>
</dbReference>
<dbReference type="InterPro" id="IPR004839">
    <property type="entry name" value="Aminotransferase_I/II_large"/>
</dbReference>
<dbReference type="InterPro" id="IPR051326">
    <property type="entry name" value="Kynurenine-oxoglutarate_AT"/>
</dbReference>
<dbReference type="InterPro" id="IPR015424">
    <property type="entry name" value="PyrdxlP-dep_Trfase"/>
</dbReference>
<dbReference type="InterPro" id="IPR015421">
    <property type="entry name" value="PyrdxlP-dep_Trfase_major"/>
</dbReference>
<dbReference type="InterPro" id="IPR015422">
    <property type="entry name" value="PyrdxlP-dep_Trfase_small"/>
</dbReference>
<dbReference type="PANTHER" id="PTHR43807">
    <property type="entry name" value="FI04487P"/>
    <property type="match status" value="1"/>
</dbReference>
<dbReference type="PANTHER" id="PTHR43807:SF20">
    <property type="entry name" value="FI04487P"/>
    <property type="match status" value="1"/>
</dbReference>
<dbReference type="Pfam" id="PF00155">
    <property type="entry name" value="Aminotran_1_2"/>
    <property type="match status" value="1"/>
</dbReference>
<dbReference type="SUPFAM" id="SSF53383">
    <property type="entry name" value="PLP-dependent transferases"/>
    <property type="match status" value="1"/>
</dbReference>
<name>KAT_AEDAE</name>
<feature type="transit peptide" description="Mitochondrion" evidence="1">
    <location>
        <begin position="1"/>
        <end position="49"/>
    </location>
</feature>
<feature type="chain" id="PRO_0000452236" description="Kynurenine aminotransferase" evidence="1">
    <location>
        <begin position="50"/>
        <end position="477"/>
    </location>
</feature>
<feature type="binding site" evidence="6 16 17">
    <location>
        <begin position="44"/>
        <end position="45"/>
    </location>
    <ligand>
        <name>substrate</name>
    </ligand>
</feature>
<feature type="binding site" evidence="5 6 15 16 17">
    <location>
        <position position="121"/>
    </location>
    <ligand>
        <name>pyridoxal 5'-phosphate</name>
        <dbReference type="ChEBI" id="CHEBI:597326"/>
        <note>ligand shared between dimeric partners</note>
    </ligand>
</feature>
<feature type="binding site" description="in other chain" evidence="5 6 15 16 17">
    <location>
        <begin position="158"/>
        <end position="159"/>
    </location>
    <ligand>
        <name>pyridoxal 5'-phosphate</name>
        <dbReference type="ChEBI" id="CHEBI:597326"/>
        <note>ligand shared between dimeric partners</note>
    </ligand>
</feature>
<feature type="binding site" description="in other chain" evidence="5 6 15 16 17">
    <location>
        <position position="241"/>
    </location>
    <ligand>
        <name>pyridoxal 5'-phosphate</name>
        <dbReference type="ChEBI" id="CHEBI:597326"/>
        <note>ligand shared between dimeric partners</note>
    </ligand>
</feature>
<feature type="binding site" description="in other chain" evidence="5 6 15 16 17">
    <location>
        <position position="272"/>
    </location>
    <ligand>
        <name>pyridoxal 5'-phosphate</name>
        <dbReference type="ChEBI" id="CHEBI:597326"/>
        <note>ligand shared between dimeric partners</note>
    </ligand>
</feature>
<feature type="binding site" description="in other chain" evidence="5 6 15 16 17">
    <location>
        <position position="300"/>
    </location>
    <ligand>
        <name>pyridoxal 5'-phosphate</name>
        <dbReference type="ChEBI" id="CHEBI:597326"/>
        <note>ligand shared between dimeric partners</note>
    </ligand>
</feature>
<feature type="binding site" description="in other chain" evidence="5 6 15 16 17">
    <location>
        <position position="311"/>
    </location>
    <ligand>
        <name>pyridoxal 5'-phosphate</name>
        <dbReference type="ChEBI" id="CHEBI:597326"/>
        <note>ligand shared between dimeric partners</note>
    </ligand>
</feature>
<feature type="binding site" evidence="6 16 17">
    <location>
        <position position="453"/>
    </location>
    <ligand>
        <name>substrate</name>
    </ligand>
</feature>
<feature type="modified residue" description="N6-(pyridoxal phosphate)lysine" evidence="5 15">
    <location>
        <position position="303"/>
    </location>
</feature>
<feature type="glycosylation site" description="N-linked (GlcNAc...) asparagine" evidence="2">
    <location>
        <position position="54"/>
    </location>
</feature>
<feature type="glycosylation site" description="N-linked (GlcNAc...) asparagine" evidence="2">
    <location>
        <position position="205"/>
    </location>
</feature>
<feature type="sequence conflict" description="In Ref. 1; AAK97625." evidence="9" ref="1">
    <original>D</original>
    <variation>N</variation>
    <location>
        <position position="105"/>
    </location>
</feature>
<feature type="strand" evidence="24">
    <location>
        <begin position="63"/>
        <end position="66"/>
    </location>
</feature>
<feature type="helix" evidence="24">
    <location>
        <begin position="74"/>
        <end position="85"/>
    </location>
</feature>
<feature type="strand" evidence="24">
    <location>
        <begin position="92"/>
        <end position="94"/>
    </location>
</feature>
<feature type="helix" evidence="24">
    <location>
        <begin position="101"/>
        <end position="111"/>
    </location>
</feature>
<feature type="helix" evidence="24">
    <location>
        <begin position="116"/>
        <end position="119"/>
    </location>
</feature>
<feature type="helix" evidence="24">
    <location>
        <begin position="128"/>
        <end position="142"/>
    </location>
</feature>
<feature type="turn" evidence="24">
    <location>
        <begin position="148"/>
        <end position="150"/>
    </location>
</feature>
<feature type="strand" evidence="24">
    <location>
        <begin position="151"/>
        <end position="156"/>
    </location>
</feature>
<feature type="helix" evidence="24">
    <location>
        <begin position="157"/>
        <end position="169"/>
    </location>
</feature>
<feature type="strand" evidence="24">
    <location>
        <begin position="175"/>
        <end position="181"/>
    </location>
</feature>
<feature type="helix" evidence="24">
    <location>
        <begin position="186"/>
        <end position="192"/>
    </location>
</feature>
<feature type="strand" evidence="24">
    <location>
        <begin position="196"/>
        <end position="201"/>
    </location>
</feature>
<feature type="strand" evidence="26">
    <location>
        <begin position="203"/>
        <end position="205"/>
    </location>
</feature>
<feature type="strand" evidence="24">
    <location>
        <begin position="207"/>
        <end position="212"/>
    </location>
</feature>
<feature type="helix" evidence="24">
    <location>
        <begin position="213"/>
        <end position="215"/>
    </location>
</feature>
<feature type="helix" evidence="24">
    <location>
        <begin position="220"/>
        <end position="226"/>
    </location>
</feature>
<feature type="strand" evidence="24">
    <location>
        <begin position="231"/>
        <end position="239"/>
    </location>
</feature>
<feature type="turn" evidence="24">
    <location>
        <begin position="241"/>
        <end position="243"/>
    </location>
</feature>
<feature type="helix" evidence="24">
    <location>
        <begin position="249"/>
        <end position="262"/>
    </location>
</feature>
<feature type="strand" evidence="24">
    <location>
        <begin position="265"/>
        <end position="269"/>
    </location>
</feature>
<feature type="turn" evidence="24">
    <location>
        <begin position="271"/>
        <end position="274"/>
    </location>
</feature>
<feature type="helix" evidence="24">
    <location>
        <begin position="285"/>
        <end position="287"/>
    </location>
</feature>
<feature type="turn" evidence="24">
    <location>
        <begin position="289"/>
        <end position="291"/>
    </location>
</feature>
<feature type="helix" evidence="24">
    <location>
        <begin position="292"/>
        <end position="294"/>
    </location>
</feature>
<feature type="strand" evidence="24">
    <location>
        <begin position="295"/>
        <end position="300"/>
    </location>
</feature>
<feature type="helix" evidence="26">
    <location>
        <begin position="301"/>
        <end position="304"/>
    </location>
</feature>
<feature type="helix" evidence="24">
    <location>
        <begin position="308"/>
        <end position="310"/>
    </location>
</feature>
<feature type="strand" evidence="24">
    <location>
        <begin position="313"/>
        <end position="317"/>
    </location>
</feature>
<feature type="helix" evidence="24">
    <location>
        <begin position="319"/>
        <end position="330"/>
    </location>
</feature>
<feature type="turn" evidence="24">
    <location>
        <begin position="331"/>
        <end position="333"/>
    </location>
</feature>
<feature type="helix" evidence="24">
    <location>
        <begin position="338"/>
        <end position="352"/>
    </location>
</feature>
<feature type="turn" evidence="24">
    <location>
        <begin position="353"/>
        <end position="356"/>
    </location>
</feature>
<feature type="strand" evidence="25">
    <location>
        <begin position="358"/>
        <end position="360"/>
    </location>
</feature>
<feature type="helix" evidence="24">
    <location>
        <begin position="361"/>
        <end position="383"/>
    </location>
</feature>
<feature type="strand" evidence="24">
    <location>
        <begin position="386"/>
        <end position="389"/>
    </location>
</feature>
<feature type="strand" evidence="24">
    <location>
        <begin position="391"/>
        <end position="399"/>
    </location>
</feature>
<feature type="helix" evidence="26">
    <location>
        <begin position="401"/>
        <end position="403"/>
    </location>
</feature>
<feature type="turn" evidence="24">
    <location>
        <begin position="405"/>
        <end position="408"/>
    </location>
</feature>
<feature type="strand" evidence="24">
    <location>
        <begin position="411"/>
        <end position="415"/>
    </location>
</feature>
<feature type="helix" evidence="24">
    <location>
        <begin position="417"/>
        <end position="428"/>
    </location>
</feature>
<feature type="strand" evidence="24">
    <location>
        <begin position="430"/>
        <end position="432"/>
    </location>
</feature>
<feature type="helix" evidence="24">
    <location>
        <begin position="436"/>
        <end position="439"/>
    </location>
</feature>
<feature type="helix" evidence="24">
    <location>
        <begin position="442"/>
        <end position="447"/>
    </location>
</feature>
<feature type="turn" evidence="24">
    <location>
        <begin position="448"/>
        <end position="450"/>
    </location>
</feature>
<feature type="strand" evidence="24">
    <location>
        <begin position="451"/>
        <end position="455"/>
    </location>
</feature>
<feature type="helix" evidence="24">
    <location>
        <begin position="460"/>
        <end position="473"/>
    </location>
</feature>
<protein>
    <recommendedName>
        <fullName evidence="8">Kynurenine aminotransferase</fullName>
        <ecNumber evidence="3 4">2.6.1.-</ecNumber>
        <ecNumber evidence="4">2.6.1.63</ecNumber>
        <ecNumber evidence="3 4">2.6.1.7</ecNumber>
    </recommendedName>
    <alternativeName>
        <fullName evidence="8">AeKAT</fullName>
    </alternativeName>
</protein>
<gene>
    <name evidence="8" type="primary">KAT</name>
    <name evidence="14" type="ORF">AAEL004435</name>
</gene>
<organism evidence="18">
    <name type="scientific">Aedes aegypti</name>
    <name type="common">Yellowfever mosquito</name>
    <name type="synonym">Culex aegypti</name>
    <dbReference type="NCBI Taxonomy" id="7159"/>
    <lineage>
        <taxon>Eukaryota</taxon>
        <taxon>Metazoa</taxon>
        <taxon>Ecdysozoa</taxon>
        <taxon>Arthropoda</taxon>
        <taxon>Hexapoda</taxon>
        <taxon>Insecta</taxon>
        <taxon>Pterygota</taxon>
        <taxon>Neoptera</taxon>
        <taxon>Endopterygota</taxon>
        <taxon>Diptera</taxon>
        <taxon>Nematocera</taxon>
        <taxon>Culicoidea</taxon>
        <taxon>Culicidae</taxon>
        <taxon>Culicinae</taxon>
        <taxon>Aedini</taxon>
        <taxon>Aedes</taxon>
        <taxon>Stegomyia</taxon>
    </lineage>
</organism>
<evidence type="ECO:0000255" key="1"/>
<evidence type="ECO:0000255" key="2">
    <source>
        <dbReference type="PROSITE-ProRule" id="PRU00498"/>
    </source>
</evidence>
<evidence type="ECO:0000269" key="3">
    <source>
    </source>
</evidence>
<evidence type="ECO:0000269" key="4">
    <source>
    </source>
</evidence>
<evidence type="ECO:0000269" key="5">
    <source>
    </source>
</evidence>
<evidence type="ECO:0000269" key="6">
    <source>
    </source>
</evidence>
<evidence type="ECO:0000269" key="7">
    <source>
    </source>
</evidence>
<evidence type="ECO:0000303" key="8">
    <source>
    </source>
</evidence>
<evidence type="ECO:0000305" key="9"/>
<evidence type="ECO:0000305" key="10">
    <source>
    </source>
</evidence>
<evidence type="ECO:0000305" key="11">
    <source>
    </source>
</evidence>
<evidence type="ECO:0000305" key="12">
    <source>
    </source>
</evidence>
<evidence type="ECO:0000312" key="13">
    <source>
        <dbReference type="EMBL" id="AAK97625.1"/>
    </source>
</evidence>
<evidence type="ECO:0000312" key="14">
    <source>
        <dbReference type="EMBL" id="EAT44194.1"/>
    </source>
</evidence>
<evidence type="ECO:0000312" key="15">
    <source>
        <dbReference type="PDB" id="1YIY"/>
    </source>
</evidence>
<evidence type="ECO:0000312" key="16">
    <source>
        <dbReference type="PDB" id="2R5C"/>
    </source>
</evidence>
<evidence type="ECO:0000312" key="17">
    <source>
        <dbReference type="PDB" id="2R5E"/>
    </source>
</evidence>
<evidence type="ECO:0000312" key="18">
    <source>
        <dbReference type="Proteomes" id="UP000008820"/>
    </source>
</evidence>
<evidence type="ECO:0007744" key="19">
    <source>
        <dbReference type="PDB" id="1YIY"/>
    </source>
</evidence>
<evidence type="ECO:0007744" key="20">
    <source>
        <dbReference type="PDB" id="1YIZ"/>
    </source>
</evidence>
<evidence type="ECO:0007744" key="21">
    <source>
        <dbReference type="PDB" id="2R5C"/>
    </source>
</evidence>
<evidence type="ECO:0007744" key="22">
    <source>
        <dbReference type="PDB" id="2R5E"/>
    </source>
</evidence>
<evidence type="ECO:0007744" key="23">
    <source>
        <dbReference type="PDB" id="5VEH"/>
    </source>
</evidence>
<evidence type="ECO:0007829" key="24">
    <source>
        <dbReference type="PDB" id="1YIZ"/>
    </source>
</evidence>
<evidence type="ECO:0007829" key="25">
    <source>
        <dbReference type="PDB" id="2R5C"/>
    </source>
</evidence>
<evidence type="ECO:0007829" key="26">
    <source>
        <dbReference type="PDB" id="2R5E"/>
    </source>
</evidence>
<reference evidence="13" key="1">
    <citation type="journal article" date="2002" name="Insect Biochem. Mol. Biol.">
        <title>Isolation, characterization, and functional expression of kynurenine aminotransferase cDNA from the yellow fever mosquito, Aedes aegypti(1).</title>
        <authorList>
            <person name="Fang J."/>
            <person name="Han Q."/>
            <person name="Li J."/>
        </authorList>
    </citation>
    <scope>NUCLEOTIDE SEQUENCE [MRNA]</scope>
    <scope>FUNCTION</scope>
    <scope>CATALYTIC ACTIVITY</scope>
    <scope>BIOPHYSICOCHEMICAL PROPERTIES</scope>
    <scope>PATHWAY</scope>
    <scope>SUBUNIT</scope>
    <scope>TISSUE SPECIFICITY</scope>
    <scope>DEVELOPMENTAL STAGE</scope>
</reference>
<reference evidence="18" key="2">
    <citation type="journal article" date="2007" name="Science">
        <title>Genome sequence of Aedes aegypti, a major arbovirus vector.</title>
        <authorList>
            <person name="Nene V."/>
            <person name="Wortman J.R."/>
            <person name="Lawson D."/>
            <person name="Haas B.J."/>
            <person name="Kodira C.D."/>
            <person name="Tu Z.J."/>
            <person name="Loftus B.J."/>
            <person name="Xi Z."/>
            <person name="Megy K."/>
            <person name="Grabherr M."/>
            <person name="Ren Q."/>
            <person name="Zdobnov E.M."/>
            <person name="Lobo N.F."/>
            <person name="Campbell K.S."/>
            <person name="Brown S.E."/>
            <person name="Bonaldo M.F."/>
            <person name="Zhu J."/>
            <person name="Sinkins S.P."/>
            <person name="Hogenkamp D.G."/>
            <person name="Amedeo P."/>
            <person name="Arensburger P."/>
            <person name="Atkinson P.W."/>
            <person name="Bidwell S.L."/>
            <person name="Biedler J."/>
            <person name="Birney E."/>
            <person name="Bruggner R.V."/>
            <person name="Costas J."/>
            <person name="Coy M.R."/>
            <person name="Crabtree J."/>
            <person name="Crawford M."/>
            <person name="DeBruyn B."/>
            <person name="DeCaprio D."/>
            <person name="Eiglmeier K."/>
            <person name="Eisenstadt E."/>
            <person name="El-Dorry H."/>
            <person name="Gelbart W.M."/>
            <person name="Gomes S.L."/>
            <person name="Hammond M."/>
            <person name="Hannick L.I."/>
            <person name="Hogan J.R."/>
            <person name="Holmes M.H."/>
            <person name="Jaffe D."/>
            <person name="Johnston S.J."/>
            <person name="Kennedy R.C."/>
            <person name="Koo H."/>
            <person name="Kravitz S."/>
            <person name="Kriventseva E.V."/>
            <person name="Kulp D."/>
            <person name="Labutti K."/>
            <person name="Lee E."/>
            <person name="Li S."/>
            <person name="Lovin D.D."/>
            <person name="Mao C."/>
            <person name="Mauceli E."/>
            <person name="Menck C.F."/>
            <person name="Miller J.R."/>
            <person name="Montgomery P."/>
            <person name="Mori A."/>
            <person name="Nascimento A.L."/>
            <person name="Naveira H.F."/>
            <person name="Nusbaum C."/>
            <person name="O'Leary S.B."/>
            <person name="Orvis J."/>
            <person name="Pertea M."/>
            <person name="Quesneville H."/>
            <person name="Reidenbach K.R."/>
            <person name="Rogers Y.-H.C."/>
            <person name="Roth C.W."/>
            <person name="Schneider J.R."/>
            <person name="Schatz M."/>
            <person name="Shumway M."/>
            <person name="Stanke M."/>
            <person name="Stinson E.O."/>
            <person name="Tubio J.M.C."/>
            <person name="Vanzee J.P."/>
            <person name="Verjovski-Almeida S."/>
            <person name="Werner D."/>
            <person name="White O.R."/>
            <person name="Wyder S."/>
            <person name="Zeng Q."/>
            <person name="Zhao Q."/>
            <person name="Zhao Y."/>
            <person name="Hill C.A."/>
            <person name="Raikhel A.S."/>
            <person name="Soares M.B."/>
            <person name="Knudson D.L."/>
            <person name="Lee N.H."/>
            <person name="Galagan J."/>
            <person name="Salzberg S.L."/>
            <person name="Paulsen I.T."/>
            <person name="Dimopoulos G."/>
            <person name="Collins F.H."/>
            <person name="Bruce B."/>
            <person name="Fraser-Liggett C.M."/>
            <person name="Severson D.W."/>
        </authorList>
    </citation>
    <scope>NUCLEOTIDE SEQUENCE [LARGE SCALE GENOMIC DNA]</scope>
    <source>
        <strain evidence="18">Liverpool</strain>
    </source>
</reference>
<reference evidence="9" key="3">
    <citation type="journal article" date="2004" name="FEBS Lett.">
        <title>Cysteine and keto acids modulate mosquito kynurenine aminotransferase catalyzed kynurenic acid production.</title>
        <authorList>
            <person name="Han Q."/>
            <person name="Li J."/>
        </authorList>
    </citation>
    <scope>FUNCTION</scope>
    <scope>CATALYTIC ACTIVITY</scope>
    <scope>ACTIVITY REGULATION</scope>
    <scope>BIOPHYSICOCHEMICAL PROPERTIES</scope>
    <scope>PATHWAY</scope>
</reference>
<reference evidence="19 20" key="4">
    <citation type="journal article" date="2005" name="FEBS J.">
        <title>Crystal structures of Aedes aegypti kynurenine aminotransferase.</title>
        <authorList>
            <person name="Han Q."/>
            <person name="Gao Y.G."/>
            <person name="Robinson H."/>
            <person name="Ding H."/>
            <person name="Wilson S."/>
            <person name="Li J."/>
        </authorList>
    </citation>
    <scope>X-RAY CRYSTALLOGRAPHY (1.55 ANGSTROMS) OF 49-477 WITH PYRIDOXAL PHOSPHATE</scope>
    <scope>COFACTOR</scope>
    <scope>SUBUNIT</scope>
</reference>
<reference evidence="21 22" key="5">
    <citation type="journal article" date="2008" name="Biochemistry">
        <title>Structural insight into the mechanism of substrate specificity of aedes kynurenine aminotransferase.</title>
        <authorList>
            <person name="Han Q."/>
            <person name="Gao Y.G."/>
            <person name="Robinson H."/>
            <person name="Li J."/>
        </authorList>
    </citation>
    <scope>X-RAY CRYSTALLOGRAPHY (1.84 ANGSTROMS) OF 49-477 WITH PYRIDOXAL PHOSPHATE; CYSTEINE AND GLUTAMINE</scope>
    <scope>COFACTOR</scope>
    <scope>SUBUNIT</scope>
</reference>
<reference evidence="23" key="6">
    <citation type="journal article" date="2018" name="FEBS J.">
        <title>Detect, correct, retract: How to manage incorrect structural models.</title>
        <authorList>
            <person name="Wlodawer A."/>
            <person name="Dauter Z."/>
            <person name="Porebski P.J."/>
            <person name="Minor W."/>
            <person name="Stanfield R."/>
            <person name="Jaskolski M."/>
            <person name="Pozharski E."/>
            <person name="Weichenberger C.X."/>
            <person name="Rupp B."/>
        </authorList>
    </citation>
    <scope>X-RAY CRYSTALLOGRAPHY (1.55 ANGSTROMS) OF 49-475</scope>
    <scope>X-RAY STRUCTURE REFINEMENT OF 1YIZ</scope>
</reference>
<keyword id="KW-0002">3D-structure</keyword>
<keyword id="KW-0032">Aminotransferase</keyword>
<keyword id="KW-0325">Glycoprotein</keyword>
<keyword id="KW-0496">Mitochondrion</keyword>
<keyword id="KW-0663">Pyridoxal phosphate</keyword>
<keyword id="KW-1185">Reference proteome</keyword>
<keyword id="KW-0808">Transferase</keyword>
<keyword id="KW-0809">Transit peptide</keyword>
<sequence length="477" mass="53506">MMFLRNHNSVGGAIRTAVVLQDLQFIVSNKSSALTGAVSSVHRQQIRTMSSTSNETMHNKFDLPKRYQGSTKSVWVEYIQLAAQYKPLNLGQGFPDYHAPKYALDALAAAANSPDPLANQYTRGFGHPRLVQALSKLYSQLVDRTINPMTEVLVTVGAYEALYATIQGHVDEGDEVIIIEPFFDCYEPMVKAAGGIPRFIPLKPNKTGGTISSADWVLDNNELEALFNEKTKMIIINTPHNPLGKVMDRAELEVVANLCKKWNVLCVSDEVYEHMVFEPFEHIRICTLPGMWERTITIGSAGKTFSLTGWKIGWAYGPEALLKNLQMVHQNCVYTCATPIQEAIAVGFETELKRLKSPECYFNSISGELMAKRDYMASFLAEVGMNPTVPQGGYFMVADWSSLDSKVDLTQETDARKDYRFTKWMTKSVGLQGIPPSAFYSEPNKHLGEDFVRYCFFKKDENLQKAAEILRKWKGSS</sequence>
<accession>Q17CS8</accession>
<accession>Q95VY4</accession>
<proteinExistence type="evidence at protein level"/>